<name>Y1273_MYCTU</name>
<comment type="subcellular location">
    <subcellularLocation>
        <location evidence="3">Cell membrane</location>
        <topology evidence="2">Multi-pass membrane protein</topology>
    </subcellularLocation>
</comment>
<comment type="similarity">
    <text evidence="3">Belongs to the ABC transporter superfamily.</text>
</comment>
<reference key="1">
    <citation type="journal article" date="1998" name="Nature">
        <title>Deciphering the biology of Mycobacterium tuberculosis from the complete genome sequence.</title>
        <authorList>
            <person name="Cole S.T."/>
            <person name="Brosch R."/>
            <person name="Parkhill J."/>
            <person name="Garnier T."/>
            <person name="Churcher C.M."/>
            <person name="Harris D.E."/>
            <person name="Gordon S.V."/>
            <person name="Eiglmeier K."/>
            <person name="Gas S."/>
            <person name="Barry C.E. III"/>
            <person name="Tekaia F."/>
            <person name="Badcock K."/>
            <person name="Basham D."/>
            <person name="Brown D."/>
            <person name="Chillingworth T."/>
            <person name="Connor R."/>
            <person name="Davies R.M."/>
            <person name="Devlin K."/>
            <person name="Feltwell T."/>
            <person name="Gentles S."/>
            <person name="Hamlin N."/>
            <person name="Holroyd S."/>
            <person name="Hornsby T."/>
            <person name="Jagels K."/>
            <person name="Krogh A."/>
            <person name="McLean J."/>
            <person name="Moule S."/>
            <person name="Murphy L.D."/>
            <person name="Oliver S."/>
            <person name="Osborne J."/>
            <person name="Quail M.A."/>
            <person name="Rajandream M.A."/>
            <person name="Rogers J."/>
            <person name="Rutter S."/>
            <person name="Seeger K."/>
            <person name="Skelton S."/>
            <person name="Squares S."/>
            <person name="Squares R."/>
            <person name="Sulston J.E."/>
            <person name="Taylor K."/>
            <person name="Whitehead S."/>
            <person name="Barrell B.G."/>
        </authorList>
    </citation>
    <scope>NUCLEOTIDE SEQUENCE [LARGE SCALE GENOMIC DNA]</scope>
    <source>
        <strain>ATCC 25618 / H37Rv</strain>
    </source>
</reference>
<reference key="2">
    <citation type="journal article" date="2011" name="Mol. Cell. Proteomics">
        <title>Proteogenomic analysis of Mycobacterium tuberculosis by high resolution mass spectrometry.</title>
        <authorList>
            <person name="Kelkar D.S."/>
            <person name="Kumar D."/>
            <person name="Kumar P."/>
            <person name="Balakrishnan L."/>
            <person name="Muthusamy B."/>
            <person name="Yadav A.K."/>
            <person name="Shrivastava P."/>
            <person name="Marimuthu A."/>
            <person name="Anand S."/>
            <person name="Sundaram H."/>
            <person name="Kingsbury R."/>
            <person name="Harsha H.C."/>
            <person name="Nair B."/>
            <person name="Prasad T.S."/>
            <person name="Chauhan D.S."/>
            <person name="Katoch K."/>
            <person name="Katoch V.M."/>
            <person name="Kumar P."/>
            <person name="Chaerkady R."/>
            <person name="Ramachandran S."/>
            <person name="Dash D."/>
            <person name="Pandey A."/>
        </authorList>
    </citation>
    <scope>IDENTIFICATION BY MASS SPECTROMETRY [LARGE SCALE ANALYSIS]</scope>
    <source>
        <strain>ATCC 25618 / H37Rv</strain>
    </source>
</reference>
<evidence type="ECO:0000255" key="1">
    <source>
        <dbReference type="PROSITE-ProRule" id="PRU00434"/>
    </source>
</evidence>
<evidence type="ECO:0000255" key="2">
    <source>
        <dbReference type="PROSITE-ProRule" id="PRU00441"/>
    </source>
</evidence>
<evidence type="ECO:0000305" key="3"/>
<keyword id="KW-0067">ATP-binding</keyword>
<keyword id="KW-1003">Cell membrane</keyword>
<keyword id="KW-0472">Membrane</keyword>
<keyword id="KW-0547">Nucleotide-binding</keyword>
<keyword id="KW-1185">Reference proteome</keyword>
<keyword id="KW-0812">Transmembrane</keyword>
<keyword id="KW-1133">Transmembrane helix</keyword>
<keyword id="KW-0813">Transport</keyword>
<gene>
    <name type="ordered locus">Rv1273c</name>
    <name type="ORF">MTCY50.09</name>
</gene>
<proteinExistence type="evidence at protein level"/>
<accession>P9WQJ1</accession>
<accession>L0T8W5</accession>
<accession>P0A4W4</accession>
<accession>Q11046</accession>
<feature type="chain" id="PRO_0000093264" description="Uncharacterized ABC transporter ATP-binding protein Rv1273c">
    <location>
        <begin position="1"/>
        <end position="582"/>
    </location>
</feature>
<feature type="transmembrane region" description="Helical" evidence="2">
    <location>
        <begin position="17"/>
        <end position="37"/>
    </location>
</feature>
<feature type="transmembrane region" description="Helical" evidence="2">
    <location>
        <begin position="57"/>
        <end position="77"/>
    </location>
</feature>
<feature type="transmembrane region" description="Helical" evidence="2">
    <location>
        <begin position="131"/>
        <end position="151"/>
    </location>
</feature>
<feature type="transmembrane region" description="Helical" evidence="2">
    <location>
        <begin position="156"/>
        <end position="176"/>
    </location>
</feature>
<feature type="transmembrane region" description="Helical" evidence="2">
    <location>
        <begin position="239"/>
        <end position="259"/>
    </location>
</feature>
<feature type="transmembrane region" description="Helical" evidence="2">
    <location>
        <begin position="271"/>
        <end position="291"/>
    </location>
</feature>
<feature type="domain" description="ABC transmembrane type-1" evidence="2">
    <location>
        <begin position="17"/>
        <end position="300"/>
    </location>
</feature>
<feature type="domain" description="ABC transporter" evidence="1">
    <location>
        <begin position="335"/>
        <end position="571"/>
    </location>
</feature>
<feature type="binding site" evidence="1">
    <location>
        <begin position="369"/>
        <end position="376"/>
    </location>
    <ligand>
        <name>ATP</name>
        <dbReference type="ChEBI" id="CHEBI:30616"/>
    </ligand>
</feature>
<sequence length="582" mass="62116">MLLALLRQHIRPYRRLVAMLMMLQLVSTLASLYLPTVNAAIVDDGVAKGDTATIVRLGAVMLGVTGLQVLCAIGAVYLGSRTGAGFGRDLRSAMFEHIITFSERETARFGAPTLLTRSTNDVRQILFLVQMTATVLVTAPIMCVGGIIMAIHQEAALTWLLLVSVPILAVANYWIISHMLPLFRRMQSLIDGINRVMRDQLSGVRVVRAFTREGYERDKFAQANTALSNAALSAGNWQALMLPVTTLTINASSVALIWFGGLRIDSGQMQVGSLIAFLSYFAQILMAVLMATMTLAVLPRASVCAERITEVLSTPAALGNPDNPKFPTDGVTGVVRLAGATFTYPGADCPVLQDISLTARPGTTTAIVGSTGSGKSTLVSLICRLYDVTAGAVLVDGIDVREYHTERLWSAIGLVPQRSYLFSGTVADNLRYGGGPDQVVTEQEMWEALRVAAADGFVQTDGLQTRVAQGGVNFSGGQRQRLAIARAVIRRPAIYVFDDAFSALDVHTDAKVHASLRQVSGDATIIVVTQRISNAAQADQVIVVDNGKIVGTGTHETLLADCPTYAEFAASQSLSATVGGVG</sequence>
<dbReference type="EMBL" id="AL123456">
    <property type="protein sequence ID" value="CCP44029.1"/>
    <property type="molecule type" value="Genomic_DNA"/>
</dbReference>
<dbReference type="PIR" id="A70755">
    <property type="entry name" value="A70755"/>
</dbReference>
<dbReference type="RefSeq" id="NP_215789.1">
    <property type="nucleotide sequence ID" value="NC_000962.3"/>
</dbReference>
<dbReference type="RefSeq" id="WP_003406574.1">
    <property type="nucleotide sequence ID" value="NZ_NVQJ01000030.1"/>
</dbReference>
<dbReference type="SMR" id="P9WQJ1"/>
<dbReference type="FunCoup" id="P9WQJ1">
    <property type="interactions" value="83"/>
</dbReference>
<dbReference type="STRING" id="83332.Rv1273c"/>
<dbReference type="PaxDb" id="83332-Rv1273c"/>
<dbReference type="DNASU" id="887025"/>
<dbReference type="GeneID" id="887025"/>
<dbReference type="KEGG" id="mtu:Rv1273c"/>
<dbReference type="KEGG" id="mtv:RVBD_1273c"/>
<dbReference type="TubercuList" id="Rv1273c"/>
<dbReference type="eggNOG" id="COG1132">
    <property type="taxonomic scope" value="Bacteria"/>
</dbReference>
<dbReference type="InParanoid" id="P9WQJ1"/>
<dbReference type="OrthoDB" id="9806127at2"/>
<dbReference type="PhylomeDB" id="P9WQJ1"/>
<dbReference type="PHI-base" id="PHI:9596"/>
<dbReference type="Proteomes" id="UP000001584">
    <property type="component" value="Chromosome"/>
</dbReference>
<dbReference type="GO" id="GO:0009274">
    <property type="term" value="C:peptidoglycan-based cell wall"/>
    <property type="evidence" value="ECO:0007005"/>
    <property type="project" value="MTBBASE"/>
</dbReference>
<dbReference type="GO" id="GO:0005886">
    <property type="term" value="C:plasma membrane"/>
    <property type="evidence" value="ECO:0007669"/>
    <property type="project" value="UniProtKB-SubCell"/>
</dbReference>
<dbReference type="GO" id="GO:0140359">
    <property type="term" value="F:ABC-type transporter activity"/>
    <property type="evidence" value="ECO:0007669"/>
    <property type="project" value="InterPro"/>
</dbReference>
<dbReference type="GO" id="GO:0005524">
    <property type="term" value="F:ATP binding"/>
    <property type="evidence" value="ECO:0007669"/>
    <property type="project" value="UniProtKB-KW"/>
</dbReference>
<dbReference type="GO" id="GO:0016887">
    <property type="term" value="F:ATP hydrolysis activity"/>
    <property type="evidence" value="ECO:0007669"/>
    <property type="project" value="InterPro"/>
</dbReference>
<dbReference type="GO" id="GO:0042626">
    <property type="term" value="F:ATPase-coupled transmembrane transporter activity"/>
    <property type="evidence" value="ECO:0000318"/>
    <property type="project" value="GO_Central"/>
</dbReference>
<dbReference type="GO" id="GO:0055085">
    <property type="term" value="P:transmembrane transport"/>
    <property type="evidence" value="ECO:0000318"/>
    <property type="project" value="GO_Central"/>
</dbReference>
<dbReference type="CDD" id="cd18548">
    <property type="entry name" value="ABC_6TM_Tm287_like"/>
    <property type="match status" value="1"/>
</dbReference>
<dbReference type="FunFam" id="1.20.1560.10:FF:000040">
    <property type="entry name" value="Multidrug ABC transporter ATP-binding protein"/>
    <property type="match status" value="1"/>
</dbReference>
<dbReference type="FunFam" id="3.40.50.300:FF:000854">
    <property type="entry name" value="Multidrug ABC transporter ATP-binding protein"/>
    <property type="match status" value="1"/>
</dbReference>
<dbReference type="Gene3D" id="1.20.1560.10">
    <property type="entry name" value="ABC transporter type 1, transmembrane domain"/>
    <property type="match status" value="1"/>
</dbReference>
<dbReference type="Gene3D" id="3.40.50.300">
    <property type="entry name" value="P-loop containing nucleotide triphosphate hydrolases"/>
    <property type="match status" value="1"/>
</dbReference>
<dbReference type="InterPro" id="IPR003593">
    <property type="entry name" value="AAA+_ATPase"/>
</dbReference>
<dbReference type="InterPro" id="IPR011527">
    <property type="entry name" value="ABC1_TM_dom"/>
</dbReference>
<dbReference type="InterPro" id="IPR036640">
    <property type="entry name" value="ABC1_TM_sf"/>
</dbReference>
<dbReference type="InterPro" id="IPR003439">
    <property type="entry name" value="ABC_transporter-like_ATP-bd"/>
</dbReference>
<dbReference type="InterPro" id="IPR017871">
    <property type="entry name" value="ABC_transporter-like_CS"/>
</dbReference>
<dbReference type="InterPro" id="IPR027417">
    <property type="entry name" value="P-loop_NTPase"/>
</dbReference>
<dbReference type="InterPro" id="IPR039421">
    <property type="entry name" value="Type_1_exporter"/>
</dbReference>
<dbReference type="PANTHER" id="PTHR43394:SF1">
    <property type="entry name" value="ATP-BINDING CASSETTE SUB-FAMILY B MEMBER 10, MITOCHONDRIAL"/>
    <property type="match status" value="1"/>
</dbReference>
<dbReference type="PANTHER" id="PTHR43394">
    <property type="entry name" value="ATP-DEPENDENT PERMEASE MDL1, MITOCHONDRIAL"/>
    <property type="match status" value="1"/>
</dbReference>
<dbReference type="Pfam" id="PF00664">
    <property type="entry name" value="ABC_membrane"/>
    <property type="match status" value="1"/>
</dbReference>
<dbReference type="Pfam" id="PF00005">
    <property type="entry name" value="ABC_tran"/>
    <property type="match status" value="1"/>
</dbReference>
<dbReference type="SMART" id="SM00382">
    <property type="entry name" value="AAA"/>
    <property type="match status" value="1"/>
</dbReference>
<dbReference type="SUPFAM" id="SSF90123">
    <property type="entry name" value="ABC transporter transmembrane region"/>
    <property type="match status" value="1"/>
</dbReference>
<dbReference type="SUPFAM" id="SSF52540">
    <property type="entry name" value="P-loop containing nucleoside triphosphate hydrolases"/>
    <property type="match status" value="1"/>
</dbReference>
<dbReference type="PROSITE" id="PS50929">
    <property type="entry name" value="ABC_TM1F"/>
    <property type="match status" value="1"/>
</dbReference>
<dbReference type="PROSITE" id="PS00211">
    <property type="entry name" value="ABC_TRANSPORTER_1"/>
    <property type="match status" value="2"/>
</dbReference>
<dbReference type="PROSITE" id="PS50893">
    <property type="entry name" value="ABC_TRANSPORTER_2"/>
    <property type="match status" value="1"/>
</dbReference>
<organism>
    <name type="scientific">Mycobacterium tuberculosis (strain ATCC 25618 / H37Rv)</name>
    <dbReference type="NCBI Taxonomy" id="83332"/>
    <lineage>
        <taxon>Bacteria</taxon>
        <taxon>Bacillati</taxon>
        <taxon>Actinomycetota</taxon>
        <taxon>Actinomycetes</taxon>
        <taxon>Mycobacteriales</taxon>
        <taxon>Mycobacteriaceae</taxon>
        <taxon>Mycobacterium</taxon>
        <taxon>Mycobacterium tuberculosis complex</taxon>
    </lineage>
</organism>
<protein>
    <recommendedName>
        <fullName>Uncharacterized ABC transporter ATP-binding protein Rv1273c</fullName>
    </recommendedName>
</protein>